<keyword id="KW-0004">4Fe-4S</keyword>
<keyword id="KW-0963">Cytoplasm</keyword>
<keyword id="KW-0408">Iron</keyword>
<keyword id="KW-0411">Iron-sulfur</keyword>
<keyword id="KW-0479">Metal-binding</keyword>
<keyword id="KW-0949">S-adenosyl-L-methionine</keyword>
<keyword id="KW-0808">Transferase</keyword>
<dbReference type="EC" id="2.8.1.8" evidence="1"/>
<dbReference type="EMBL" id="CP000937">
    <property type="protein sequence ID" value="ABZ87789.1"/>
    <property type="molecule type" value="Genomic_DNA"/>
</dbReference>
<dbReference type="SMR" id="B0TZD6"/>
<dbReference type="KEGG" id="fph:Fphi_1563"/>
<dbReference type="eggNOG" id="COG0320">
    <property type="taxonomic scope" value="Bacteria"/>
</dbReference>
<dbReference type="HOGENOM" id="CLU_033144_2_0_6"/>
<dbReference type="UniPathway" id="UPA00538">
    <property type="reaction ID" value="UER00593"/>
</dbReference>
<dbReference type="GO" id="GO:0005737">
    <property type="term" value="C:cytoplasm"/>
    <property type="evidence" value="ECO:0007669"/>
    <property type="project" value="UniProtKB-SubCell"/>
</dbReference>
<dbReference type="GO" id="GO:0051539">
    <property type="term" value="F:4 iron, 4 sulfur cluster binding"/>
    <property type="evidence" value="ECO:0007669"/>
    <property type="project" value="UniProtKB-UniRule"/>
</dbReference>
<dbReference type="GO" id="GO:0016992">
    <property type="term" value="F:lipoate synthase activity"/>
    <property type="evidence" value="ECO:0007669"/>
    <property type="project" value="UniProtKB-UniRule"/>
</dbReference>
<dbReference type="GO" id="GO:0046872">
    <property type="term" value="F:metal ion binding"/>
    <property type="evidence" value="ECO:0007669"/>
    <property type="project" value="UniProtKB-KW"/>
</dbReference>
<dbReference type="CDD" id="cd01335">
    <property type="entry name" value="Radical_SAM"/>
    <property type="match status" value="1"/>
</dbReference>
<dbReference type="FunFam" id="3.20.20.70:FF:000040">
    <property type="entry name" value="Lipoyl synthase"/>
    <property type="match status" value="1"/>
</dbReference>
<dbReference type="Gene3D" id="3.20.20.70">
    <property type="entry name" value="Aldolase class I"/>
    <property type="match status" value="1"/>
</dbReference>
<dbReference type="HAMAP" id="MF_00206">
    <property type="entry name" value="Lipoyl_synth"/>
    <property type="match status" value="1"/>
</dbReference>
<dbReference type="InterPro" id="IPR013785">
    <property type="entry name" value="Aldolase_TIM"/>
</dbReference>
<dbReference type="InterPro" id="IPR006638">
    <property type="entry name" value="Elp3/MiaA/NifB-like_rSAM"/>
</dbReference>
<dbReference type="InterPro" id="IPR031691">
    <property type="entry name" value="LIAS_N"/>
</dbReference>
<dbReference type="InterPro" id="IPR003698">
    <property type="entry name" value="Lipoyl_synth"/>
</dbReference>
<dbReference type="InterPro" id="IPR007197">
    <property type="entry name" value="rSAM"/>
</dbReference>
<dbReference type="NCBIfam" id="TIGR00510">
    <property type="entry name" value="lipA"/>
    <property type="match status" value="1"/>
</dbReference>
<dbReference type="NCBIfam" id="NF004019">
    <property type="entry name" value="PRK05481.1"/>
    <property type="match status" value="1"/>
</dbReference>
<dbReference type="NCBIfam" id="NF009544">
    <property type="entry name" value="PRK12928.1"/>
    <property type="match status" value="1"/>
</dbReference>
<dbReference type="PANTHER" id="PTHR10949">
    <property type="entry name" value="LIPOYL SYNTHASE"/>
    <property type="match status" value="1"/>
</dbReference>
<dbReference type="PANTHER" id="PTHR10949:SF0">
    <property type="entry name" value="LIPOYL SYNTHASE, MITOCHONDRIAL"/>
    <property type="match status" value="1"/>
</dbReference>
<dbReference type="Pfam" id="PF16881">
    <property type="entry name" value="LIAS_N"/>
    <property type="match status" value="1"/>
</dbReference>
<dbReference type="Pfam" id="PF04055">
    <property type="entry name" value="Radical_SAM"/>
    <property type="match status" value="1"/>
</dbReference>
<dbReference type="PIRSF" id="PIRSF005963">
    <property type="entry name" value="Lipoyl_synth"/>
    <property type="match status" value="1"/>
</dbReference>
<dbReference type="SFLD" id="SFLDF00271">
    <property type="entry name" value="lipoyl_synthase"/>
    <property type="match status" value="1"/>
</dbReference>
<dbReference type="SFLD" id="SFLDS00029">
    <property type="entry name" value="Radical_SAM"/>
    <property type="match status" value="1"/>
</dbReference>
<dbReference type="SMART" id="SM00729">
    <property type="entry name" value="Elp3"/>
    <property type="match status" value="1"/>
</dbReference>
<dbReference type="SUPFAM" id="SSF102114">
    <property type="entry name" value="Radical SAM enzymes"/>
    <property type="match status" value="1"/>
</dbReference>
<dbReference type="PROSITE" id="PS51918">
    <property type="entry name" value="RADICAL_SAM"/>
    <property type="match status" value="1"/>
</dbReference>
<feature type="chain" id="PRO_1000077957" description="Lipoyl synthase">
    <location>
        <begin position="1"/>
        <end position="327"/>
    </location>
</feature>
<feature type="domain" description="Radical SAM core" evidence="2">
    <location>
        <begin position="83"/>
        <end position="302"/>
    </location>
</feature>
<feature type="binding site" evidence="1">
    <location>
        <position position="72"/>
    </location>
    <ligand>
        <name>[4Fe-4S] cluster</name>
        <dbReference type="ChEBI" id="CHEBI:49883"/>
        <label>1</label>
    </ligand>
</feature>
<feature type="binding site" evidence="1">
    <location>
        <position position="77"/>
    </location>
    <ligand>
        <name>[4Fe-4S] cluster</name>
        <dbReference type="ChEBI" id="CHEBI:49883"/>
        <label>1</label>
    </ligand>
</feature>
<feature type="binding site" evidence="1">
    <location>
        <position position="83"/>
    </location>
    <ligand>
        <name>[4Fe-4S] cluster</name>
        <dbReference type="ChEBI" id="CHEBI:49883"/>
        <label>1</label>
    </ligand>
</feature>
<feature type="binding site" evidence="1">
    <location>
        <position position="98"/>
    </location>
    <ligand>
        <name>[4Fe-4S] cluster</name>
        <dbReference type="ChEBI" id="CHEBI:49883"/>
        <label>2</label>
        <note>4Fe-4S-S-AdoMet</note>
    </ligand>
</feature>
<feature type="binding site" evidence="1">
    <location>
        <position position="102"/>
    </location>
    <ligand>
        <name>[4Fe-4S] cluster</name>
        <dbReference type="ChEBI" id="CHEBI:49883"/>
        <label>2</label>
        <note>4Fe-4S-S-AdoMet</note>
    </ligand>
</feature>
<feature type="binding site" evidence="1">
    <location>
        <position position="105"/>
    </location>
    <ligand>
        <name>[4Fe-4S] cluster</name>
        <dbReference type="ChEBI" id="CHEBI:49883"/>
        <label>2</label>
        <note>4Fe-4S-S-AdoMet</note>
    </ligand>
</feature>
<feature type="binding site" evidence="1">
    <location>
        <position position="313"/>
    </location>
    <ligand>
        <name>[4Fe-4S] cluster</name>
        <dbReference type="ChEBI" id="CHEBI:49883"/>
        <label>1</label>
    </ligand>
</feature>
<protein>
    <recommendedName>
        <fullName evidence="1">Lipoyl synthase</fullName>
        <ecNumber evidence="1">2.8.1.8</ecNumber>
    </recommendedName>
    <alternativeName>
        <fullName evidence="1">Lip-syn</fullName>
        <shortName evidence="1">LS</shortName>
    </alternativeName>
    <alternativeName>
        <fullName evidence="1">Lipoate synthase</fullName>
    </alternativeName>
    <alternativeName>
        <fullName evidence="1">Lipoic acid synthase</fullName>
    </alternativeName>
    <alternativeName>
        <fullName evidence="1">Sulfur insertion protein LipA</fullName>
    </alternativeName>
</protein>
<reference key="1">
    <citation type="submission" date="2007-12" db="EMBL/GenBank/DDBJ databases">
        <title>Complete sequence of chromosome of Francisella philomiragia subsp. philomiragia ATCC 25017.</title>
        <authorList>
            <consortium name="US DOE Joint Genome Institute"/>
            <person name="Copeland A."/>
            <person name="Lucas S."/>
            <person name="Lapidus A."/>
            <person name="Barry K."/>
            <person name="Detter J.C."/>
            <person name="Glavina del Rio T."/>
            <person name="Hammon N."/>
            <person name="Israni S."/>
            <person name="Dalin E."/>
            <person name="Tice H."/>
            <person name="Pitluck S."/>
            <person name="Chain P."/>
            <person name="Malfatti S."/>
            <person name="Shin M."/>
            <person name="Vergez L."/>
            <person name="Schmutz J."/>
            <person name="Larimer F."/>
            <person name="Land M."/>
            <person name="Hauser L."/>
            <person name="Richardson P."/>
        </authorList>
    </citation>
    <scope>NUCLEOTIDE SEQUENCE [LARGE SCALE GENOMIC DNA]</scope>
    <source>
        <strain>ATCC 25017 / CCUG 19701 / FSC 153 / O#319-036</strain>
    </source>
</reference>
<gene>
    <name evidence="1" type="primary">lipA</name>
    <name type="ordered locus">Fphi_1563</name>
</gene>
<organism>
    <name type="scientific">Francisella philomiragia subsp. philomiragia (strain ATCC 25017 / CCUG 19701 / FSC 153 / O#319-036)</name>
    <dbReference type="NCBI Taxonomy" id="484022"/>
    <lineage>
        <taxon>Bacteria</taxon>
        <taxon>Pseudomonadati</taxon>
        <taxon>Pseudomonadota</taxon>
        <taxon>Gammaproteobacteria</taxon>
        <taxon>Thiotrichales</taxon>
        <taxon>Francisellaceae</taxon>
        <taxon>Francisella</taxon>
    </lineage>
</organism>
<evidence type="ECO:0000255" key="1">
    <source>
        <dbReference type="HAMAP-Rule" id="MF_00206"/>
    </source>
</evidence>
<evidence type="ECO:0000255" key="2">
    <source>
        <dbReference type="PROSITE-ProRule" id="PRU01266"/>
    </source>
</evidence>
<proteinExistence type="inferred from homology"/>
<sequence>MKEISNIKVKIESGTKYTTDHGFHAVKDGIRNKKENSVHIRKPEWLKVKKQDSKEYLKVKSITKKHRLSTVCEEAKCPNINECWSHGTATIMLMGAVCTRACKFCSVDTGNPKGWLDKEEPQNTAESVKLMNLEYVVLTSVDRDDLVDGGAGHYAATITAIKNLDENIKVEALTPDFAGVKENVDKIINTKVDVIAQNIETVERLTHPVRDPRAGYWQTLEFLRYVKQKSPNILTKTSIMVGLGETDEEIYKTMDDARSVGVDIITLGQYMQPTKHHLSVERFVTPQQFEEYRRVGLEKGFLEVASGPMVRSSYRADRVFKRNNLDL</sequence>
<comment type="function">
    <text evidence="1">Catalyzes the radical-mediated insertion of two sulfur atoms into the C-6 and C-8 positions of the octanoyl moiety bound to the lipoyl domains of lipoate-dependent enzymes, thereby converting the octanoylated domains into lipoylated derivatives.</text>
</comment>
<comment type="catalytic activity">
    <reaction evidence="1">
        <text>[[Fe-S] cluster scaffold protein carrying a second [4Fe-4S](2+) cluster] + N(6)-octanoyl-L-lysyl-[protein] + 2 oxidized [2Fe-2S]-[ferredoxin] + 2 S-adenosyl-L-methionine + 4 H(+) = [[Fe-S] cluster scaffold protein] + N(6)-[(R)-dihydrolipoyl]-L-lysyl-[protein] + 4 Fe(3+) + 2 hydrogen sulfide + 2 5'-deoxyadenosine + 2 L-methionine + 2 reduced [2Fe-2S]-[ferredoxin]</text>
        <dbReference type="Rhea" id="RHEA:16585"/>
        <dbReference type="Rhea" id="RHEA-COMP:9928"/>
        <dbReference type="Rhea" id="RHEA-COMP:10000"/>
        <dbReference type="Rhea" id="RHEA-COMP:10001"/>
        <dbReference type="Rhea" id="RHEA-COMP:10475"/>
        <dbReference type="Rhea" id="RHEA-COMP:14568"/>
        <dbReference type="Rhea" id="RHEA-COMP:14569"/>
        <dbReference type="ChEBI" id="CHEBI:15378"/>
        <dbReference type="ChEBI" id="CHEBI:17319"/>
        <dbReference type="ChEBI" id="CHEBI:29034"/>
        <dbReference type="ChEBI" id="CHEBI:29919"/>
        <dbReference type="ChEBI" id="CHEBI:33722"/>
        <dbReference type="ChEBI" id="CHEBI:33737"/>
        <dbReference type="ChEBI" id="CHEBI:33738"/>
        <dbReference type="ChEBI" id="CHEBI:57844"/>
        <dbReference type="ChEBI" id="CHEBI:59789"/>
        <dbReference type="ChEBI" id="CHEBI:78809"/>
        <dbReference type="ChEBI" id="CHEBI:83100"/>
        <dbReference type="EC" id="2.8.1.8"/>
    </reaction>
</comment>
<comment type="cofactor">
    <cofactor evidence="1">
        <name>[4Fe-4S] cluster</name>
        <dbReference type="ChEBI" id="CHEBI:49883"/>
    </cofactor>
    <text evidence="1">Binds 2 [4Fe-4S] clusters per subunit. One cluster is coordinated with 3 cysteines and an exchangeable S-adenosyl-L-methionine.</text>
</comment>
<comment type="pathway">
    <text evidence="1">Protein modification; protein lipoylation via endogenous pathway; protein N(6)-(lipoyl)lysine from octanoyl-[acyl-carrier-protein]: step 2/2.</text>
</comment>
<comment type="subcellular location">
    <subcellularLocation>
        <location evidence="1">Cytoplasm</location>
    </subcellularLocation>
</comment>
<comment type="similarity">
    <text evidence="1">Belongs to the radical SAM superfamily. Lipoyl synthase family.</text>
</comment>
<accession>B0TZD6</accession>
<name>LIPA_FRAP2</name>